<evidence type="ECO:0000255" key="1">
    <source>
        <dbReference type="HAMAP-Rule" id="MF_01307"/>
    </source>
</evidence>
<evidence type="ECO:0000256" key="2">
    <source>
        <dbReference type="SAM" id="MobiDB-lite"/>
    </source>
</evidence>
<evidence type="ECO:0000305" key="3"/>
<keyword id="KW-1185">Reference proteome</keyword>
<keyword id="KW-0687">Ribonucleoprotein</keyword>
<keyword id="KW-0689">Ribosomal protein</keyword>
<keyword id="KW-0694">RNA-binding</keyword>
<keyword id="KW-0699">rRNA-binding</keyword>
<reference key="1">
    <citation type="journal article" date="2001" name="Proc. Natl. Acad. Sci. U.S.A.">
        <title>Genome sequence of an industrial microorganism Streptomyces avermitilis: deducing the ability of producing secondary metabolites.</title>
        <authorList>
            <person name="Omura S."/>
            <person name="Ikeda H."/>
            <person name="Ishikawa J."/>
            <person name="Hanamoto A."/>
            <person name="Takahashi C."/>
            <person name="Shinose M."/>
            <person name="Takahashi Y."/>
            <person name="Horikawa H."/>
            <person name="Nakazawa H."/>
            <person name="Osonoe T."/>
            <person name="Kikuchi H."/>
            <person name="Shiba T."/>
            <person name="Sakaki Y."/>
            <person name="Hattori M."/>
        </authorList>
    </citation>
    <scope>NUCLEOTIDE SEQUENCE [LARGE SCALE GENOMIC DNA]</scope>
    <source>
        <strain>ATCC 31267 / DSM 46492 / JCM 5070 / NBRC 14893 / NCIMB 12804 / NRRL 8165 / MA-4680</strain>
    </source>
</reference>
<reference key="2">
    <citation type="journal article" date="2003" name="Nat. Biotechnol.">
        <title>Complete genome sequence and comparative analysis of the industrial microorganism Streptomyces avermitilis.</title>
        <authorList>
            <person name="Ikeda H."/>
            <person name="Ishikawa J."/>
            <person name="Hanamoto A."/>
            <person name="Shinose M."/>
            <person name="Kikuchi H."/>
            <person name="Shiba T."/>
            <person name="Sakaki Y."/>
            <person name="Hattori M."/>
            <person name="Omura S."/>
        </authorList>
    </citation>
    <scope>NUCLEOTIDE SEQUENCE [LARGE SCALE GENOMIC DNA]</scope>
    <source>
        <strain>ATCC 31267 / DSM 46492 / JCM 5070 / NBRC 14893 / NCIMB 12804 / NRRL 8165 / MA-4680</strain>
    </source>
</reference>
<feature type="chain" id="PRO_0000131603" description="Small ribosomal subunit protein uS5">
    <location>
        <begin position="1"/>
        <end position="201"/>
    </location>
</feature>
<feature type="domain" description="S5 DRBM" evidence="1">
    <location>
        <begin position="34"/>
        <end position="97"/>
    </location>
</feature>
<feature type="region of interest" description="Disordered" evidence="2">
    <location>
        <begin position="1"/>
        <end position="27"/>
    </location>
</feature>
<feature type="compositionally biased region" description="Basic and acidic residues" evidence="2">
    <location>
        <begin position="14"/>
        <end position="23"/>
    </location>
</feature>
<proteinExistence type="inferred from homology"/>
<sequence length="201" mass="20344">MAGPQRRGSGAGGGERRDRKGRDGGAAAAEKTAYVERVVAINRVAKVVKGGRRFSFTALVVVGDGDGTVGVGYGKAKEVPAAIAKGVEEAKKHFFKVPRIQGTIPHPITGEKAAGVVLLKPASPGTGVIAGGPVRAVLECAGVHDILSKSLGSSNAINIVHATVAALKGLQRPEEIAARRGLPLEDVAPAALLRARAGAGA</sequence>
<accession>Q82DM9</accession>
<comment type="function">
    <text evidence="1">With S4 and S12 plays an important role in translational accuracy.</text>
</comment>
<comment type="function">
    <text evidence="1">Located at the back of the 30S subunit body where it stabilizes the conformation of the head with respect to the body.</text>
</comment>
<comment type="subunit">
    <text evidence="1">Part of the 30S ribosomal subunit. Contacts proteins S4 and S8.</text>
</comment>
<comment type="domain">
    <text>The N-terminal domain interacts with the head of the 30S subunit; the C-terminal domain interacts with the body and contacts protein S4. The interaction surface between S4 and S5 is involved in control of translational fidelity.</text>
</comment>
<comment type="similarity">
    <text evidence="1">Belongs to the universal ribosomal protein uS5 family.</text>
</comment>
<dbReference type="EMBL" id="BA000030">
    <property type="protein sequence ID" value="BAC72655.1"/>
    <property type="molecule type" value="Genomic_DNA"/>
</dbReference>
<dbReference type="RefSeq" id="WP_006376045.1">
    <property type="nucleotide sequence ID" value="NZ_JZJK01000077.1"/>
</dbReference>
<dbReference type="SMR" id="Q82DM9"/>
<dbReference type="GeneID" id="97403219"/>
<dbReference type="KEGG" id="sma:SAVERM_4943"/>
<dbReference type="eggNOG" id="COG0098">
    <property type="taxonomic scope" value="Bacteria"/>
</dbReference>
<dbReference type="HOGENOM" id="CLU_065898_1_2_11"/>
<dbReference type="OrthoDB" id="9809045at2"/>
<dbReference type="Proteomes" id="UP000000428">
    <property type="component" value="Chromosome"/>
</dbReference>
<dbReference type="GO" id="GO:0015935">
    <property type="term" value="C:small ribosomal subunit"/>
    <property type="evidence" value="ECO:0007669"/>
    <property type="project" value="InterPro"/>
</dbReference>
<dbReference type="GO" id="GO:0019843">
    <property type="term" value="F:rRNA binding"/>
    <property type="evidence" value="ECO:0007669"/>
    <property type="project" value="UniProtKB-UniRule"/>
</dbReference>
<dbReference type="GO" id="GO:0003735">
    <property type="term" value="F:structural constituent of ribosome"/>
    <property type="evidence" value="ECO:0007669"/>
    <property type="project" value="InterPro"/>
</dbReference>
<dbReference type="GO" id="GO:0006412">
    <property type="term" value="P:translation"/>
    <property type="evidence" value="ECO:0007669"/>
    <property type="project" value="UniProtKB-UniRule"/>
</dbReference>
<dbReference type="FunFam" id="3.30.160.20:FF:000001">
    <property type="entry name" value="30S ribosomal protein S5"/>
    <property type="match status" value="1"/>
</dbReference>
<dbReference type="FunFam" id="3.30.230.10:FF:000002">
    <property type="entry name" value="30S ribosomal protein S5"/>
    <property type="match status" value="1"/>
</dbReference>
<dbReference type="Gene3D" id="3.30.160.20">
    <property type="match status" value="1"/>
</dbReference>
<dbReference type="Gene3D" id="3.30.230.10">
    <property type="match status" value="1"/>
</dbReference>
<dbReference type="HAMAP" id="MF_01307_B">
    <property type="entry name" value="Ribosomal_uS5_B"/>
    <property type="match status" value="1"/>
</dbReference>
<dbReference type="InterPro" id="IPR020568">
    <property type="entry name" value="Ribosomal_Su5_D2-typ_SF"/>
</dbReference>
<dbReference type="InterPro" id="IPR000851">
    <property type="entry name" value="Ribosomal_uS5"/>
</dbReference>
<dbReference type="InterPro" id="IPR005712">
    <property type="entry name" value="Ribosomal_uS5_bac-type"/>
</dbReference>
<dbReference type="InterPro" id="IPR005324">
    <property type="entry name" value="Ribosomal_uS5_C"/>
</dbReference>
<dbReference type="InterPro" id="IPR013810">
    <property type="entry name" value="Ribosomal_uS5_N"/>
</dbReference>
<dbReference type="InterPro" id="IPR018192">
    <property type="entry name" value="Ribosomal_uS5_N_CS"/>
</dbReference>
<dbReference type="InterPro" id="IPR014721">
    <property type="entry name" value="Ribsml_uS5_D2-typ_fold_subgr"/>
</dbReference>
<dbReference type="NCBIfam" id="TIGR01021">
    <property type="entry name" value="rpsE_bact"/>
    <property type="match status" value="1"/>
</dbReference>
<dbReference type="PANTHER" id="PTHR48277">
    <property type="entry name" value="MITOCHONDRIAL RIBOSOMAL PROTEIN S5"/>
    <property type="match status" value="1"/>
</dbReference>
<dbReference type="PANTHER" id="PTHR48277:SF1">
    <property type="entry name" value="MITOCHONDRIAL RIBOSOMAL PROTEIN S5"/>
    <property type="match status" value="1"/>
</dbReference>
<dbReference type="Pfam" id="PF00333">
    <property type="entry name" value="Ribosomal_S5"/>
    <property type="match status" value="1"/>
</dbReference>
<dbReference type="Pfam" id="PF03719">
    <property type="entry name" value="Ribosomal_S5_C"/>
    <property type="match status" value="1"/>
</dbReference>
<dbReference type="SUPFAM" id="SSF54768">
    <property type="entry name" value="dsRNA-binding domain-like"/>
    <property type="match status" value="1"/>
</dbReference>
<dbReference type="SUPFAM" id="SSF54211">
    <property type="entry name" value="Ribosomal protein S5 domain 2-like"/>
    <property type="match status" value="1"/>
</dbReference>
<dbReference type="PROSITE" id="PS00585">
    <property type="entry name" value="RIBOSOMAL_S5"/>
    <property type="match status" value="1"/>
</dbReference>
<dbReference type="PROSITE" id="PS50881">
    <property type="entry name" value="S5_DSRBD"/>
    <property type="match status" value="1"/>
</dbReference>
<organism>
    <name type="scientific">Streptomyces avermitilis (strain ATCC 31267 / DSM 46492 / JCM 5070 / NBRC 14893 / NCIMB 12804 / NRRL 8165 / MA-4680)</name>
    <dbReference type="NCBI Taxonomy" id="227882"/>
    <lineage>
        <taxon>Bacteria</taxon>
        <taxon>Bacillati</taxon>
        <taxon>Actinomycetota</taxon>
        <taxon>Actinomycetes</taxon>
        <taxon>Kitasatosporales</taxon>
        <taxon>Streptomycetaceae</taxon>
        <taxon>Streptomyces</taxon>
    </lineage>
</organism>
<gene>
    <name evidence="1" type="primary">rpsE</name>
    <name type="ordered locus">SAV_4943</name>
</gene>
<name>RS5_STRAW</name>
<protein>
    <recommendedName>
        <fullName evidence="1">Small ribosomal subunit protein uS5</fullName>
    </recommendedName>
    <alternativeName>
        <fullName evidence="3">30S ribosomal protein S5</fullName>
    </alternativeName>
</protein>